<dbReference type="EMBL" id="AM747720">
    <property type="protein sequence ID" value="CAR50568.1"/>
    <property type="molecule type" value="Genomic_DNA"/>
</dbReference>
<dbReference type="RefSeq" id="WP_006400641.1">
    <property type="nucleotide sequence ID" value="NC_011000.1"/>
</dbReference>
<dbReference type="SMR" id="B4E5E3"/>
<dbReference type="GeneID" id="93170994"/>
<dbReference type="KEGG" id="bcj:BCAL0257"/>
<dbReference type="eggNOG" id="COG0099">
    <property type="taxonomic scope" value="Bacteria"/>
</dbReference>
<dbReference type="HOGENOM" id="CLU_103849_1_2_4"/>
<dbReference type="BioCyc" id="BCEN216591:G1G1V-300-MONOMER"/>
<dbReference type="Proteomes" id="UP000001035">
    <property type="component" value="Chromosome 1"/>
</dbReference>
<dbReference type="GO" id="GO:0005829">
    <property type="term" value="C:cytosol"/>
    <property type="evidence" value="ECO:0007669"/>
    <property type="project" value="TreeGrafter"/>
</dbReference>
<dbReference type="GO" id="GO:0015935">
    <property type="term" value="C:small ribosomal subunit"/>
    <property type="evidence" value="ECO:0007669"/>
    <property type="project" value="TreeGrafter"/>
</dbReference>
<dbReference type="GO" id="GO:0019843">
    <property type="term" value="F:rRNA binding"/>
    <property type="evidence" value="ECO:0007669"/>
    <property type="project" value="UniProtKB-UniRule"/>
</dbReference>
<dbReference type="GO" id="GO:0003735">
    <property type="term" value="F:structural constituent of ribosome"/>
    <property type="evidence" value="ECO:0007669"/>
    <property type="project" value="InterPro"/>
</dbReference>
<dbReference type="GO" id="GO:0000049">
    <property type="term" value="F:tRNA binding"/>
    <property type="evidence" value="ECO:0007669"/>
    <property type="project" value="UniProtKB-UniRule"/>
</dbReference>
<dbReference type="GO" id="GO:0006412">
    <property type="term" value="P:translation"/>
    <property type="evidence" value="ECO:0007669"/>
    <property type="project" value="UniProtKB-UniRule"/>
</dbReference>
<dbReference type="FunFam" id="1.10.8.50:FF:000001">
    <property type="entry name" value="30S ribosomal protein S13"/>
    <property type="match status" value="1"/>
</dbReference>
<dbReference type="FunFam" id="4.10.910.10:FF:000001">
    <property type="entry name" value="30S ribosomal protein S13"/>
    <property type="match status" value="1"/>
</dbReference>
<dbReference type="Gene3D" id="1.10.8.50">
    <property type="match status" value="1"/>
</dbReference>
<dbReference type="Gene3D" id="4.10.910.10">
    <property type="entry name" value="30s ribosomal protein s13, domain 2"/>
    <property type="match status" value="1"/>
</dbReference>
<dbReference type="HAMAP" id="MF_01315">
    <property type="entry name" value="Ribosomal_uS13"/>
    <property type="match status" value="1"/>
</dbReference>
<dbReference type="InterPro" id="IPR027437">
    <property type="entry name" value="Rbsml_uS13_C"/>
</dbReference>
<dbReference type="InterPro" id="IPR001892">
    <property type="entry name" value="Ribosomal_uS13"/>
</dbReference>
<dbReference type="InterPro" id="IPR010979">
    <property type="entry name" value="Ribosomal_uS13-like_H2TH"/>
</dbReference>
<dbReference type="InterPro" id="IPR019980">
    <property type="entry name" value="Ribosomal_uS13_bac-type"/>
</dbReference>
<dbReference type="InterPro" id="IPR018269">
    <property type="entry name" value="Ribosomal_uS13_CS"/>
</dbReference>
<dbReference type="NCBIfam" id="TIGR03631">
    <property type="entry name" value="uS13_bact"/>
    <property type="match status" value="1"/>
</dbReference>
<dbReference type="PANTHER" id="PTHR10871">
    <property type="entry name" value="30S RIBOSOMAL PROTEIN S13/40S RIBOSOMAL PROTEIN S18"/>
    <property type="match status" value="1"/>
</dbReference>
<dbReference type="PANTHER" id="PTHR10871:SF1">
    <property type="entry name" value="SMALL RIBOSOMAL SUBUNIT PROTEIN US13M"/>
    <property type="match status" value="1"/>
</dbReference>
<dbReference type="Pfam" id="PF00416">
    <property type="entry name" value="Ribosomal_S13"/>
    <property type="match status" value="1"/>
</dbReference>
<dbReference type="PIRSF" id="PIRSF002134">
    <property type="entry name" value="Ribosomal_S13"/>
    <property type="match status" value="1"/>
</dbReference>
<dbReference type="SUPFAM" id="SSF46946">
    <property type="entry name" value="S13-like H2TH domain"/>
    <property type="match status" value="1"/>
</dbReference>
<dbReference type="PROSITE" id="PS00646">
    <property type="entry name" value="RIBOSOMAL_S13_1"/>
    <property type="match status" value="1"/>
</dbReference>
<dbReference type="PROSITE" id="PS50159">
    <property type="entry name" value="RIBOSOMAL_S13_2"/>
    <property type="match status" value="1"/>
</dbReference>
<keyword id="KW-0687">Ribonucleoprotein</keyword>
<keyword id="KW-0689">Ribosomal protein</keyword>
<keyword id="KW-0694">RNA-binding</keyword>
<keyword id="KW-0699">rRNA-binding</keyword>
<keyword id="KW-0820">tRNA-binding</keyword>
<reference key="1">
    <citation type="journal article" date="2009" name="J. Bacteriol.">
        <title>The genome of Burkholderia cenocepacia J2315, an epidemic pathogen of cystic fibrosis patients.</title>
        <authorList>
            <person name="Holden M.T."/>
            <person name="Seth-Smith H.M."/>
            <person name="Crossman L.C."/>
            <person name="Sebaihia M."/>
            <person name="Bentley S.D."/>
            <person name="Cerdeno-Tarraga A.M."/>
            <person name="Thomson N.R."/>
            <person name="Bason N."/>
            <person name="Quail M.A."/>
            <person name="Sharp S."/>
            <person name="Cherevach I."/>
            <person name="Churcher C."/>
            <person name="Goodhead I."/>
            <person name="Hauser H."/>
            <person name="Holroyd N."/>
            <person name="Mungall K."/>
            <person name="Scott P."/>
            <person name="Walker D."/>
            <person name="White B."/>
            <person name="Rose H."/>
            <person name="Iversen P."/>
            <person name="Mil-Homens D."/>
            <person name="Rocha E.P."/>
            <person name="Fialho A.M."/>
            <person name="Baldwin A."/>
            <person name="Dowson C."/>
            <person name="Barrell B.G."/>
            <person name="Govan J.R."/>
            <person name="Vandamme P."/>
            <person name="Hart C.A."/>
            <person name="Mahenthiralingam E."/>
            <person name="Parkhill J."/>
        </authorList>
    </citation>
    <scope>NUCLEOTIDE SEQUENCE [LARGE SCALE GENOMIC DNA]</scope>
    <source>
        <strain>ATCC BAA-245 / DSM 16553 / LMG 16656 / NCTC 13227 / J2315 / CF5610</strain>
    </source>
</reference>
<name>RS13_BURCJ</name>
<comment type="function">
    <text evidence="1">Located at the top of the head of the 30S subunit, it contacts several helices of the 16S rRNA. In the 70S ribosome it contacts the 23S rRNA (bridge B1a) and protein L5 of the 50S subunit (bridge B1b), connecting the 2 subunits; these bridges are implicated in subunit movement. Contacts the tRNAs in the A and P-sites.</text>
</comment>
<comment type="subunit">
    <text evidence="1">Part of the 30S ribosomal subunit. Forms a loose heterodimer with protein S19. Forms two bridges to the 50S subunit in the 70S ribosome.</text>
</comment>
<comment type="similarity">
    <text evidence="1">Belongs to the universal ribosomal protein uS13 family.</text>
</comment>
<gene>
    <name evidence="1" type="primary">rpsM</name>
    <name type="ordered locus">BceJ2315_02600</name>
    <name type="ORF">BCAL0257</name>
</gene>
<evidence type="ECO:0000255" key="1">
    <source>
        <dbReference type="HAMAP-Rule" id="MF_01315"/>
    </source>
</evidence>
<evidence type="ECO:0000256" key="2">
    <source>
        <dbReference type="SAM" id="MobiDB-lite"/>
    </source>
</evidence>
<evidence type="ECO:0000305" key="3"/>
<feature type="chain" id="PRO_1000141231" description="Small ribosomal subunit protein uS13">
    <location>
        <begin position="1"/>
        <end position="121"/>
    </location>
</feature>
<feature type="region of interest" description="Disordered" evidence="2">
    <location>
        <begin position="92"/>
        <end position="121"/>
    </location>
</feature>
<sequence length="121" mass="13624">MARIAGVNIPNHQHTEIGLTAIFGIGRTRSRSICVAAGVDFSKKVKDLTDADLEKLREEVGKFVVEGDLRREVTMNIKRLMDLGCYRGVRHRKGLPMRGQRTRTNARTRKGPRRAAQALKK</sequence>
<protein>
    <recommendedName>
        <fullName evidence="1">Small ribosomal subunit protein uS13</fullName>
    </recommendedName>
    <alternativeName>
        <fullName evidence="3">30S ribosomal protein S13</fullName>
    </alternativeName>
</protein>
<proteinExistence type="inferred from homology"/>
<accession>B4E5E3</accession>
<organism>
    <name type="scientific">Burkholderia cenocepacia (strain ATCC BAA-245 / DSM 16553 / LMG 16656 / NCTC 13227 / J2315 / CF5610)</name>
    <name type="common">Burkholderia cepacia (strain J2315)</name>
    <dbReference type="NCBI Taxonomy" id="216591"/>
    <lineage>
        <taxon>Bacteria</taxon>
        <taxon>Pseudomonadati</taxon>
        <taxon>Pseudomonadota</taxon>
        <taxon>Betaproteobacteria</taxon>
        <taxon>Burkholderiales</taxon>
        <taxon>Burkholderiaceae</taxon>
        <taxon>Burkholderia</taxon>
        <taxon>Burkholderia cepacia complex</taxon>
    </lineage>
</organism>